<name>FAKD3_RAT</name>
<proteinExistence type="evidence at transcript level"/>
<comment type="function">
    <text evidence="1">Required for normal mitochondrial respiration. Increases steady-state levels and half-lives of a subset of mature mitochondrial mRNAs MT-ND2, MT-ND3, MT-CYTB, MT-CO2, and MT-ATP8/6. Promotes MT-CO1 mRNA translation and increases mitochondrial complex IV assembly and activity.</text>
</comment>
<comment type="subcellular location">
    <subcellularLocation>
        <location evidence="1">Mitochondrion</location>
    </subcellularLocation>
</comment>
<comment type="domain">
    <text evidence="1">RAP domain is required for FASTKD3 function in mRNA stability and translation.</text>
</comment>
<comment type="similarity">
    <text evidence="3">Belongs to the FAST kinase family.</text>
</comment>
<dbReference type="EMBL" id="AABR03104692">
    <property type="status" value="NOT_ANNOTATED_CDS"/>
    <property type="molecule type" value="Genomic_DNA"/>
</dbReference>
<dbReference type="EMBL" id="BC079475">
    <property type="protein sequence ID" value="AAH79475.1"/>
    <property type="molecule type" value="mRNA"/>
</dbReference>
<dbReference type="RefSeq" id="NP_001076043.1">
    <property type="nucleotide sequence ID" value="NM_001082574.1"/>
</dbReference>
<dbReference type="RefSeq" id="XP_006227871.1">
    <property type="nucleotide sequence ID" value="XM_006227809.4"/>
</dbReference>
<dbReference type="RefSeq" id="XP_006227873.1">
    <property type="nucleotide sequence ID" value="XM_006227811.3"/>
</dbReference>
<dbReference type="RefSeq" id="XP_017444338.1">
    <property type="nucleotide sequence ID" value="XM_017588849.1"/>
</dbReference>
<dbReference type="SMR" id="Q68FN9"/>
<dbReference type="FunCoup" id="Q68FN9">
    <property type="interactions" value="2149"/>
</dbReference>
<dbReference type="STRING" id="10116.ENSRNOP00000029498"/>
<dbReference type="PhosphoSitePlus" id="Q68FN9"/>
<dbReference type="PaxDb" id="10116-ENSRNOP00000029498"/>
<dbReference type="Ensembl" id="ENSRNOT00000034410.7">
    <property type="protein sequence ID" value="ENSRNOP00000029498.4"/>
    <property type="gene ID" value="ENSRNOG00000027422.7"/>
</dbReference>
<dbReference type="GeneID" id="290946"/>
<dbReference type="KEGG" id="rno:290946"/>
<dbReference type="UCSC" id="RGD:1309729">
    <property type="organism name" value="rat"/>
</dbReference>
<dbReference type="AGR" id="RGD:1309729"/>
<dbReference type="CTD" id="79072"/>
<dbReference type="RGD" id="1309729">
    <property type="gene designation" value="Fastkd3"/>
</dbReference>
<dbReference type="eggNOG" id="ENOG502QW8P">
    <property type="taxonomic scope" value="Eukaryota"/>
</dbReference>
<dbReference type="GeneTree" id="ENSGT01030000234607"/>
<dbReference type="HOGENOM" id="CLU_028858_0_0_1"/>
<dbReference type="InParanoid" id="Q68FN9"/>
<dbReference type="OMA" id="VQIPYHE"/>
<dbReference type="OrthoDB" id="69564at9989"/>
<dbReference type="PhylomeDB" id="Q68FN9"/>
<dbReference type="TreeFam" id="TF324885"/>
<dbReference type="PRO" id="PR:Q68FN9"/>
<dbReference type="Proteomes" id="UP000002494">
    <property type="component" value="Chromosome 1"/>
</dbReference>
<dbReference type="Bgee" id="ENSRNOG00000027422">
    <property type="expression patterns" value="Expressed in ovary and 19 other cell types or tissues"/>
</dbReference>
<dbReference type="ExpressionAtlas" id="Q68FN9">
    <property type="expression patterns" value="baseline and differential"/>
</dbReference>
<dbReference type="GO" id="GO:0005759">
    <property type="term" value="C:mitochondrial matrix"/>
    <property type="evidence" value="ECO:0000318"/>
    <property type="project" value="GO_Central"/>
</dbReference>
<dbReference type="GO" id="GO:0005739">
    <property type="term" value="C:mitochondrion"/>
    <property type="evidence" value="ECO:0000250"/>
    <property type="project" value="UniProtKB"/>
</dbReference>
<dbReference type="GO" id="GO:0035770">
    <property type="term" value="C:ribonucleoprotein granule"/>
    <property type="evidence" value="ECO:0000318"/>
    <property type="project" value="GO_Central"/>
</dbReference>
<dbReference type="GO" id="GO:0003723">
    <property type="term" value="F:RNA binding"/>
    <property type="evidence" value="ECO:0000318"/>
    <property type="project" value="GO_Central"/>
</dbReference>
<dbReference type="GO" id="GO:0033617">
    <property type="term" value="P:mitochondrial cytochrome c oxidase assembly"/>
    <property type="evidence" value="ECO:0000250"/>
    <property type="project" value="UniProtKB"/>
</dbReference>
<dbReference type="GO" id="GO:0000963">
    <property type="term" value="P:mitochondrial RNA processing"/>
    <property type="evidence" value="ECO:0000318"/>
    <property type="project" value="GO_Central"/>
</dbReference>
<dbReference type="GO" id="GO:0070131">
    <property type="term" value="P:positive regulation of mitochondrial translation"/>
    <property type="evidence" value="ECO:0000250"/>
    <property type="project" value="UniProtKB"/>
</dbReference>
<dbReference type="GO" id="GO:0044528">
    <property type="term" value="P:regulation of mitochondrial mRNA stability"/>
    <property type="evidence" value="ECO:0000250"/>
    <property type="project" value="UniProtKB"/>
</dbReference>
<dbReference type="InterPro" id="IPR013579">
    <property type="entry name" value="FAST_2"/>
</dbReference>
<dbReference type="InterPro" id="IPR050870">
    <property type="entry name" value="FAST_kinase"/>
</dbReference>
<dbReference type="InterPro" id="IPR010622">
    <property type="entry name" value="FAST_Leu-rich"/>
</dbReference>
<dbReference type="InterPro" id="IPR013584">
    <property type="entry name" value="RAP"/>
</dbReference>
<dbReference type="PANTHER" id="PTHR21228:SF9">
    <property type="entry name" value="FAST KINASE DOMAIN-CONTAINING PROTEIN 3, MITOCHONDRIAL"/>
    <property type="match status" value="1"/>
</dbReference>
<dbReference type="PANTHER" id="PTHR21228">
    <property type="entry name" value="FAST LEU-RICH DOMAIN-CONTAINING"/>
    <property type="match status" value="1"/>
</dbReference>
<dbReference type="Pfam" id="PF06743">
    <property type="entry name" value="FAST_1"/>
    <property type="match status" value="1"/>
</dbReference>
<dbReference type="Pfam" id="PF08368">
    <property type="entry name" value="FAST_2"/>
    <property type="match status" value="1"/>
</dbReference>
<dbReference type="Pfam" id="PF08373">
    <property type="entry name" value="RAP"/>
    <property type="match status" value="1"/>
</dbReference>
<dbReference type="SMART" id="SM00952">
    <property type="entry name" value="RAP"/>
    <property type="match status" value="1"/>
</dbReference>
<dbReference type="PROSITE" id="PS51286">
    <property type="entry name" value="RAP"/>
    <property type="match status" value="1"/>
</dbReference>
<gene>
    <name type="primary">Fastkd3</name>
</gene>
<protein>
    <recommendedName>
        <fullName>FAST kinase domain-containing protein 3, mitochondrial</fullName>
    </recommendedName>
</protein>
<accession>Q68FN9</accession>
<evidence type="ECO:0000250" key="1">
    <source>
        <dbReference type="UniProtKB" id="Q14CZ7"/>
    </source>
</evidence>
<evidence type="ECO:0000255" key="2">
    <source>
        <dbReference type="PROSITE-ProRule" id="PRU00619"/>
    </source>
</evidence>
<evidence type="ECO:0000305" key="3"/>
<feature type="transit peptide" description="Mitochondrion" evidence="3">
    <location>
        <begin position="1"/>
        <end status="unknown"/>
    </location>
</feature>
<feature type="chain" id="PRO_0000284717" description="FAST kinase domain-containing protein 3, mitochondrial">
    <location>
        <begin status="unknown"/>
        <end position="656"/>
    </location>
</feature>
<feature type="domain" description="RAP" evidence="2">
    <location>
        <begin position="587"/>
        <end position="645"/>
    </location>
</feature>
<sequence>MAFTLRRAFCHMSVFWMPGAVVALKIHPANNVQKAVRDCLRVWFCSLQPDLFRVRFYHAYCKSFHSENGNDLHPVGEPWFSQAQVWNQPEQTLKNEDEEMLSRRLNSFASFEEVLSFIHTLDTLPVTLASAALLRICEIGKRDDEQRLPKEVLENRVFQALCLRCERDPSHLTNAVLVTVLQSLVIDPQSSLVLSLVAECQRRLRRGSLEVHHLCVLGESLARLQGASCEILKLVICQLQSENLETFAPEDIVSVYRILQACPEEVDKHQTFLNTVNNFSLSIVSYLSPKSISHVLTALVALDQTHARPLLIKLGKSVVRYIPRFTNEELRQVLEAFVYFGHSDRFFTEALEQHVAAQCFSLDPAVASSVMEYCSRKRILSKPIFDVVAEIFVCQSEKFSPSQISELIEPFGKLNYLPPNAPALFRKVENVLFAHLRHFPPKMLLRLLHSCSLIERHPVNFMSKIFSPFFLQRLQGKESYLDRLSLAQMTQLFLTSVLECPFYKGPKLLPKYQVKSFLTPCCSLETPMDLHLYKSVVIGLIDLLGSRLYFASKVLTPYYYTIDVEIKLDEDGFVLPFTVDEDVHTRVALCIDGPQRFCLGSKHLLGKEAIKQRHLRLLGYQVVQVPYHELELLTSRLELVDYLQRKLFSQSSTVHW</sequence>
<reference key="1">
    <citation type="journal article" date="2004" name="Nature">
        <title>Genome sequence of the Brown Norway rat yields insights into mammalian evolution.</title>
        <authorList>
            <person name="Gibbs R.A."/>
            <person name="Weinstock G.M."/>
            <person name="Metzker M.L."/>
            <person name="Muzny D.M."/>
            <person name="Sodergren E.J."/>
            <person name="Scherer S."/>
            <person name="Scott G."/>
            <person name="Steffen D."/>
            <person name="Worley K.C."/>
            <person name="Burch P.E."/>
            <person name="Okwuonu G."/>
            <person name="Hines S."/>
            <person name="Lewis L."/>
            <person name="Deramo C."/>
            <person name="Delgado O."/>
            <person name="Dugan-Rocha S."/>
            <person name="Miner G."/>
            <person name="Morgan M."/>
            <person name="Hawes A."/>
            <person name="Gill R."/>
            <person name="Holt R.A."/>
            <person name="Adams M.D."/>
            <person name="Amanatides P.G."/>
            <person name="Baden-Tillson H."/>
            <person name="Barnstead M."/>
            <person name="Chin S."/>
            <person name="Evans C.A."/>
            <person name="Ferriera S."/>
            <person name="Fosler C."/>
            <person name="Glodek A."/>
            <person name="Gu Z."/>
            <person name="Jennings D."/>
            <person name="Kraft C.L."/>
            <person name="Nguyen T."/>
            <person name="Pfannkoch C.M."/>
            <person name="Sitter C."/>
            <person name="Sutton G.G."/>
            <person name="Venter J.C."/>
            <person name="Woodage T."/>
            <person name="Smith D."/>
            <person name="Lee H.-M."/>
            <person name="Gustafson E."/>
            <person name="Cahill P."/>
            <person name="Kana A."/>
            <person name="Doucette-Stamm L."/>
            <person name="Weinstock K."/>
            <person name="Fechtel K."/>
            <person name="Weiss R.B."/>
            <person name="Dunn D.M."/>
            <person name="Green E.D."/>
            <person name="Blakesley R.W."/>
            <person name="Bouffard G.G."/>
            <person name="De Jong P.J."/>
            <person name="Osoegawa K."/>
            <person name="Zhu B."/>
            <person name="Marra M."/>
            <person name="Schein J."/>
            <person name="Bosdet I."/>
            <person name="Fjell C."/>
            <person name="Jones S."/>
            <person name="Krzywinski M."/>
            <person name="Mathewson C."/>
            <person name="Siddiqui A."/>
            <person name="Wye N."/>
            <person name="McPherson J."/>
            <person name="Zhao S."/>
            <person name="Fraser C.M."/>
            <person name="Shetty J."/>
            <person name="Shatsman S."/>
            <person name="Geer K."/>
            <person name="Chen Y."/>
            <person name="Abramzon S."/>
            <person name="Nierman W.C."/>
            <person name="Havlak P.H."/>
            <person name="Chen R."/>
            <person name="Durbin K.J."/>
            <person name="Egan A."/>
            <person name="Ren Y."/>
            <person name="Song X.-Z."/>
            <person name="Li B."/>
            <person name="Liu Y."/>
            <person name="Qin X."/>
            <person name="Cawley S."/>
            <person name="Cooney A.J."/>
            <person name="D'Souza L.M."/>
            <person name="Martin K."/>
            <person name="Wu J.Q."/>
            <person name="Gonzalez-Garay M.L."/>
            <person name="Jackson A.R."/>
            <person name="Kalafus K.J."/>
            <person name="McLeod M.P."/>
            <person name="Milosavljevic A."/>
            <person name="Virk D."/>
            <person name="Volkov A."/>
            <person name="Wheeler D.A."/>
            <person name="Zhang Z."/>
            <person name="Bailey J.A."/>
            <person name="Eichler E.E."/>
            <person name="Tuzun E."/>
            <person name="Birney E."/>
            <person name="Mongin E."/>
            <person name="Ureta-Vidal A."/>
            <person name="Woodwark C."/>
            <person name="Zdobnov E."/>
            <person name="Bork P."/>
            <person name="Suyama M."/>
            <person name="Torrents D."/>
            <person name="Alexandersson M."/>
            <person name="Trask B.J."/>
            <person name="Young J.M."/>
            <person name="Huang H."/>
            <person name="Wang H."/>
            <person name="Xing H."/>
            <person name="Daniels S."/>
            <person name="Gietzen D."/>
            <person name="Schmidt J."/>
            <person name="Stevens K."/>
            <person name="Vitt U."/>
            <person name="Wingrove J."/>
            <person name="Camara F."/>
            <person name="Mar Alba M."/>
            <person name="Abril J.F."/>
            <person name="Guigo R."/>
            <person name="Smit A."/>
            <person name="Dubchak I."/>
            <person name="Rubin E.M."/>
            <person name="Couronne O."/>
            <person name="Poliakov A."/>
            <person name="Huebner N."/>
            <person name="Ganten D."/>
            <person name="Goesele C."/>
            <person name="Hummel O."/>
            <person name="Kreitler T."/>
            <person name="Lee Y.-A."/>
            <person name="Monti J."/>
            <person name="Schulz H."/>
            <person name="Zimdahl H."/>
            <person name="Himmelbauer H."/>
            <person name="Lehrach H."/>
            <person name="Jacob H.J."/>
            <person name="Bromberg S."/>
            <person name="Gullings-Handley J."/>
            <person name="Jensen-Seaman M.I."/>
            <person name="Kwitek A.E."/>
            <person name="Lazar J."/>
            <person name="Pasko D."/>
            <person name="Tonellato P.J."/>
            <person name="Twigger S."/>
            <person name="Ponting C.P."/>
            <person name="Duarte J.M."/>
            <person name="Rice S."/>
            <person name="Goodstadt L."/>
            <person name="Beatson S.A."/>
            <person name="Emes R.D."/>
            <person name="Winter E.E."/>
            <person name="Webber C."/>
            <person name="Brandt P."/>
            <person name="Nyakatura G."/>
            <person name="Adetobi M."/>
            <person name="Chiaromonte F."/>
            <person name="Elnitski L."/>
            <person name="Eswara P."/>
            <person name="Hardison R.C."/>
            <person name="Hou M."/>
            <person name="Kolbe D."/>
            <person name="Makova K."/>
            <person name="Miller W."/>
            <person name="Nekrutenko A."/>
            <person name="Riemer C."/>
            <person name="Schwartz S."/>
            <person name="Taylor J."/>
            <person name="Yang S."/>
            <person name="Zhang Y."/>
            <person name="Lindpaintner K."/>
            <person name="Andrews T.D."/>
            <person name="Caccamo M."/>
            <person name="Clamp M."/>
            <person name="Clarke L."/>
            <person name="Curwen V."/>
            <person name="Durbin R.M."/>
            <person name="Eyras E."/>
            <person name="Searle S.M."/>
            <person name="Cooper G.M."/>
            <person name="Batzoglou S."/>
            <person name="Brudno M."/>
            <person name="Sidow A."/>
            <person name="Stone E.A."/>
            <person name="Payseur B.A."/>
            <person name="Bourque G."/>
            <person name="Lopez-Otin C."/>
            <person name="Puente X.S."/>
            <person name="Chakrabarti K."/>
            <person name="Chatterji S."/>
            <person name="Dewey C."/>
            <person name="Pachter L."/>
            <person name="Bray N."/>
            <person name="Yap V.B."/>
            <person name="Caspi A."/>
            <person name="Tesler G."/>
            <person name="Pevzner P.A."/>
            <person name="Haussler D."/>
            <person name="Roskin K.M."/>
            <person name="Baertsch R."/>
            <person name="Clawson H."/>
            <person name="Furey T.S."/>
            <person name="Hinrichs A.S."/>
            <person name="Karolchik D."/>
            <person name="Kent W.J."/>
            <person name="Rosenbloom K.R."/>
            <person name="Trumbower H."/>
            <person name="Weirauch M."/>
            <person name="Cooper D.N."/>
            <person name="Stenson P.D."/>
            <person name="Ma B."/>
            <person name="Brent M."/>
            <person name="Arumugam M."/>
            <person name="Shteynberg D."/>
            <person name="Copley R.R."/>
            <person name="Taylor M.S."/>
            <person name="Riethman H."/>
            <person name="Mudunuri U."/>
            <person name="Peterson J."/>
            <person name="Guyer M."/>
            <person name="Felsenfeld A."/>
            <person name="Old S."/>
            <person name="Mockrin S."/>
            <person name="Collins F.S."/>
        </authorList>
    </citation>
    <scope>NUCLEOTIDE SEQUENCE [LARGE SCALE GENOMIC DNA]</scope>
    <source>
        <strain>Brown Norway</strain>
    </source>
</reference>
<reference key="2">
    <citation type="journal article" date="2004" name="Genome Res.">
        <title>The status, quality, and expansion of the NIH full-length cDNA project: the Mammalian Gene Collection (MGC).</title>
        <authorList>
            <consortium name="The MGC Project Team"/>
        </authorList>
    </citation>
    <scope>NUCLEOTIDE SEQUENCE [LARGE SCALE MRNA] OF 66-656</scope>
    <source>
        <tissue>Lung</tissue>
    </source>
</reference>
<organism>
    <name type="scientific">Rattus norvegicus</name>
    <name type="common">Rat</name>
    <dbReference type="NCBI Taxonomy" id="10116"/>
    <lineage>
        <taxon>Eukaryota</taxon>
        <taxon>Metazoa</taxon>
        <taxon>Chordata</taxon>
        <taxon>Craniata</taxon>
        <taxon>Vertebrata</taxon>
        <taxon>Euteleostomi</taxon>
        <taxon>Mammalia</taxon>
        <taxon>Eutheria</taxon>
        <taxon>Euarchontoglires</taxon>
        <taxon>Glires</taxon>
        <taxon>Rodentia</taxon>
        <taxon>Myomorpha</taxon>
        <taxon>Muroidea</taxon>
        <taxon>Muridae</taxon>
        <taxon>Murinae</taxon>
        <taxon>Rattus</taxon>
    </lineage>
</organism>
<keyword id="KW-0496">Mitochondrion</keyword>
<keyword id="KW-1185">Reference proteome</keyword>
<keyword id="KW-0809">Transit peptide</keyword>